<keyword id="KW-0963">Cytoplasm</keyword>
<keyword id="KW-0238">DNA-binding</keyword>
<keyword id="KW-0677">Repeat</keyword>
<keyword id="KW-0804">Transcription</keyword>
<keyword id="KW-0805">Transcription regulation</keyword>
<dbReference type="EMBL" id="CP000712">
    <property type="protein sequence ID" value="ABQ80519.1"/>
    <property type="molecule type" value="Genomic_DNA"/>
</dbReference>
<dbReference type="SMR" id="A5W8Q9"/>
<dbReference type="KEGG" id="ppf:Pput_4396"/>
<dbReference type="eggNOG" id="COG2001">
    <property type="taxonomic scope" value="Bacteria"/>
</dbReference>
<dbReference type="HOGENOM" id="CLU_107907_2_0_6"/>
<dbReference type="GO" id="GO:0005737">
    <property type="term" value="C:cytoplasm"/>
    <property type="evidence" value="ECO:0007669"/>
    <property type="project" value="UniProtKB-UniRule"/>
</dbReference>
<dbReference type="GO" id="GO:0009295">
    <property type="term" value="C:nucleoid"/>
    <property type="evidence" value="ECO:0007669"/>
    <property type="project" value="UniProtKB-SubCell"/>
</dbReference>
<dbReference type="GO" id="GO:0003700">
    <property type="term" value="F:DNA-binding transcription factor activity"/>
    <property type="evidence" value="ECO:0007669"/>
    <property type="project" value="UniProtKB-UniRule"/>
</dbReference>
<dbReference type="GO" id="GO:0000976">
    <property type="term" value="F:transcription cis-regulatory region binding"/>
    <property type="evidence" value="ECO:0007669"/>
    <property type="project" value="TreeGrafter"/>
</dbReference>
<dbReference type="GO" id="GO:2000143">
    <property type="term" value="P:negative regulation of DNA-templated transcription initiation"/>
    <property type="evidence" value="ECO:0007669"/>
    <property type="project" value="TreeGrafter"/>
</dbReference>
<dbReference type="CDD" id="cd16321">
    <property type="entry name" value="MraZ_C"/>
    <property type="match status" value="1"/>
</dbReference>
<dbReference type="CDD" id="cd16320">
    <property type="entry name" value="MraZ_N"/>
    <property type="match status" value="1"/>
</dbReference>
<dbReference type="Gene3D" id="3.40.1550.20">
    <property type="entry name" value="Transcriptional regulator MraZ domain"/>
    <property type="match status" value="1"/>
</dbReference>
<dbReference type="HAMAP" id="MF_01008">
    <property type="entry name" value="MraZ"/>
    <property type="match status" value="1"/>
</dbReference>
<dbReference type="InterPro" id="IPR003444">
    <property type="entry name" value="MraZ"/>
</dbReference>
<dbReference type="InterPro" id="IPR035644">
    <property type="entry name" value="MraZ_C"/>
</dbReference>
<dbReference type="InterPro" id="IPR020603">
    <property type="entry name" value="MraZ_dom"/>
</dbReference>
<dbReference type="InterPro" id="IPR035642">
    <property type="entry name" value="MraZ_N"/>
</dbReference>
<dbReference type="InterPro" id="IPR038619">
    <property type="entry name" value="MraZ_sf"/>
</dbReference>
<dbReference type="InterPro" id="IPR007159">
    <property type="entry name" value="SpoVT-AbrB_dom"/>
</dbReference>
<dbReference type="InterPro" id="IPR037914">
    <property type="entry name" value="SpoVT-AbrB_sf"/>
</dbReference>
<dbReference type="NCBIfam" id="TIGR00242">
    <property type="entry name" value="division/cell wall cluster transcriptional repressor MraZ"/>
    <property type="match status" value="1"/>
</dbReference>
<dbReference type="PANTHER" id="PTHR34701">
    <property type="entry name" value="TRANSCRIPTIONAL REGULATOR MRAZ"/>
    <property type="match status" value="1"/>
</dbReference>
<dbReference type="PANTHER" id="PTHR34701:SF1">
    <property type="entry name" value="TRANSCRIPTIONAL REGULATOR MRAZ"/>
    <property type="match status" value="1"/>
</dbReference>
<dbReference type="Pfam" id="PF02381">
    <property type="entry name" value="MraZ"/>
    <property type="match status" value="2"/>
</dbReference>
<dbReference type="SUPFAM" id="SSF89447">
    <property type="entry name" value="AbrB/MazE/MraZ-like"/>
    <property type="match status" value="1"/>
</dbReference>
<dbReference type="PROSITE" id="PS51740">
    <property type="entry name" value="SPOVT_ABRB"/>
    <property type="match status" value="2"/>
</dbReference>
<accession>A5W8Q9</accession>
<comment type="subunit">
    <text evidence="1">Forms oligomers.</text>
</comment>
<comment type="subcellular location">
    <subcellularLocation>
        <location evidence="1">Cytoplasm</location>
        <location evidence="1">Nucleoid</location>
    </subcellularLocation>
</comment>
<comment type="similarity">
    <text evidence="1">Belongs to the MraZ family.</text>
</comment>
<name>MRAZ_PSEP1</name>
<protein>
    <recommendedName>
        <fullName>Transcriptional regulator MraZ</fullName>
    </recommendedName>
</protein>
<reference key="1">
    <citation type="submission" date="2007-05" db="EMBL/GenBank/DDBJ databases">
        <title>Complete sequence of Pseudomonas putida F1.</title>
        <authorList>
            <consortium name="US DOE Joint Genome Institute"/>
            <person name="Copeland A."/>
            <person name="Lucas S."/>
            <person name="Lapidus A."/>
            <person name="Barry K."/>
            <person name="Detter J.C."/>
            <person name="Glavina del Rio T."/>
            <person name="Hammon N."/>
            <person name="Israni S."/>
            <person name="Dalin E."/>
            <person name="Tice H."/>
            <person name="Pitluck S."/>
            <person name="Chain P."/>
            <person name="Malfatti S."/>
            <person name="Shin M."/>
            <person name="Vergez L."/>
            <person name="Schmutz J."/>
            <person name="Larimer F."/>
            <person name="Land M."/>
            <person name="Hauser L."/>
            <person name="Kyrpides N."/>
            <person name="Lykidis A."/>
            <person name="Parales R."/>
            <person name="Richardson P."/>
        </authorList>
    </citation>
    <scope>NUCLEOTIDE SEQUENCE [LARGE SCALE GENOMIC DNA]</scope>
    <source>
        <strain>ATCC 700007 / DSM 6899 / JCM 31910 / BCRC 17059 / LMG 24140 / F1</strain>
    </source>
</reference>
<proteinExistence type="inferred from homology"/>
<evidence type="ECO:0000255" key="1">
    <source>
        <dbReference type="HAMAP-Rule" id="MF_01008"/>
    </source>
</evidence>
<evidence type="ECO:0000255" key="2">
    <source>
        <dbReference type="PROSITE-ProRule" id="PRU01076"/>
    </source>
</evidence>
<gene>
    <name evidence="1" type="primary">mraZ</name>
    <name type="ordered locus">Pput_4396</name>
</gene>
<feature type="chain" id="PRO_1000062915" description="Transcriptional regulator MraZ">
    <location>
        <begin position="1"/>
        <end position="151"/>
    </location>
</feature>
<feature type="domain" description="SpoVT-AbrB 1" evidence="2">
    <location>
        <begin position="5"/>
        <end position="52"/>
    </location>
</feature>
<feature type="domain" description="SpoVT-AbrB 2" evidence="2">
    <location>
        <begin position="81"/>
        <end position="124"/>
    </location>
</feature>
<sequence length="151" mass="17035">MFRGANAVSLDAKGRLAMPSRYRDELDSRCNGQLIVTIDAVDPCLCVYPLDEWEQIEAKLRALPSLREENRRLQRLLIGNAVDLELDGSGRFLVPPRLREYAKLDKKAMLVGQLNKFQLWDEDAWNAVSAADLAAIQQPGAMPDELRDLIL</sequence>
<organism>
    <name type="scientific">Pseudomonas putida (strain ATCC 700007 / DSM 6899 / JCM 31910 / BCRC 17059 / LMG 24140 / F1)</name>
    <dbReference type="NCBI Taxonomy" id="351746"/>
    <lineage>
        <taxon>Bacteria</taxon>
        <taxon>Pseudomonadati</taxon>
        <taxon>Pseudomonadota</taxon>
        <taxon>Gammaproteobacteria</taxon>
        <taxon>Pseudomonadales</taxon>
        <taxon>Pseudomonadaceae</taxon>
        <taxon>Pseudomonas</taxon>
    </lineage>
</organism>